<name>CSRA_XANE5</name>
<gene>
    <name evidence="1" type="primary">csrA</name>
    <name type="ordered locus">XCV1776</name>
</gene>
<organism>
    <name type="scientific">Xanthomonas euvesicatoria pv. vesicatoria (strain 85-10)</name>
    <name type="common">Xanthomonas campestris pv. vesicatoria</name>
    <dbReference type="NCBI Taxonomy" id="316273"/>
    <lineage>
        <taxon>Bacteria</taxon>
        <taxon>Pseudomonadati</taxon>
        <taxon>Pseudomonadota</taxon>
        <taxon>Gammaproteobacteria</taxon>
        <taxon>Lysobacterales</taxon>
        <taxon>Lysobacteraceae</taxon>
        <taxon>Xanthomonas</taxon>
    </lineage>
</organism>
<accession>Q3BUQ6</accession>
<dbReference type="EMBL" id="AM039952">
    <property type="protein sequence ID" value="CAJ23453.1"/>
    <property type="molecule type" value="Genomic_DNA"/>
</dbReference>
<dbReference type="RefSeq" id="WP_003481884.1">
    <property type="nucleotide sequence ID" value="NZ_CP017190.1"/>
</dbReference>
<dbReference type="SMR" id="Q3BUQ6"/>
<dbReference type="STRING" id="456327.BJD11_13660"/>
<dbReference type="GeneID" id="97510119"/>
<dbReference type="KEGG" id="xcv:XCV1776"/>
<dbReference type="eggNOG" id="COG1551">
    <property type="taxonomic scope" value="Bacteria"/>
</dbReference>
<dbReference type="HOGENOM" id="CLU_164837_2_1_6"/>
<dbReference type="Proteomes" id="UP000007069">
    <property type="component" value="Chromosome"/>
</dbReference>
<dbReference type="GO" id="GO:0005829">
    <property type="term" value="C:cytosol"/>
    <property type="evidence" value="ECO:0007669"/>
    <property type="project" value="TreeGrafter"/>
</dbReference>
<dbReference type="GO" id="GO:0048027">
    <property type="term" value="F:mRNA 5'-UTR binding"/>
    <property type="evidence" value="ECO:0007669"/>
    <property type="project" value="UniProtKB-UniRule"/>
</dbReference>
<dbReference type="GO" id="GO:0006402">
    <property type="term" value="P:mRNA catabolic process"/>
    <property type="evidence" value="ECO:0007669"/>
    <property type="project" value="InterPro"/>
</dbReference>
<dbReference type="GO" id="GO:0045947">
    <property type="term" value="P:negative regulation of translational initiation"/>
    <property type="evidence" value="ECO:0007669"/>
    <property type="project" value="UniProtKB-UniRule"/>
</dbReference>
<dbReference type="GO" id="GO:0045948">
    <property type="term" value="P:positive regulation of translational initiation"/>
    <property type="evidence" value="ECO:0007669"/>
    <property type="project" value="UniProtKB-UniRule"/>
</dbReference>
<dbReference type="GO" id="GO:0006109">
    <property type="term" value="P:regulation of carbohydrate metabolic process"/>
    <property type="evidence" value="ECO:0007669"/>
    <property type="project" value="UniProtKB-UniRule"/>
</dbReference>
<dbReference type="FunFam" id="2.60.40.4380:FF:000001">
    <property type="entry name" value="Translational regulator CsrA"/>
    <property type="match status" value="1"/>
</dbReference>
<dbReference type="Gene3D" id="2.60.40.4380">
    <property type="entry name" value="Translational regulator CsrA"/>
    <property type="match status" value="1"/>
</dbReference>
<dbReference type="HAMAP" id="MF_00167">
    <property type="entry name" value="CsrA"/>
    <property type="match status" value="1"/>
</dbReference>
<dbReference type="InterPro" id="IPR003751">
    <property type="entry name" value="CsrA"/>
</dbReference>
<dbReference type="InterPro" id="IPR036107">
    <property type="entry name" value="CsrA_sf"/>
</dbReference>
<dbReference type="NCBIfam" id="TIGR00202">
    <property type="entry name" value="csrA"/>
    <property type="match status" value="1"/>
</dbReference>
<dbReference type="NCBIfam" id="NF002469">
    <property type="entry name" value="PRK01712.1"/>
    <property type="match status" value="1"/>
</dbReference>
<dbReference type="PANTHER" id="PTHR34984">
    <property type="entry name" value="CARBON STORAGE REGULATOR"/>
    <property type="match status" value="1"/>
</dbReference>
<dbReference type="PANTHER" id="PTHR34984:SF1">
    <property type="entry name" value="CARBON STORAGE REGULATOR"/>
    <property type="match status" value="1"/>
</dbReference>
<dbReference type="Pfam" id="PF02599">
    <property type="entry name" value="CsrA"/>
    <property type="match status" value="1"/>
</dbReference>
<dbReference type="SUPFAM" id="SSF117130">
    <property type="entry name" value="CsrA-like"/>
    <property type="match status" value="1"/>
</dbReference>
<evidence type="ECO:0000255" key="1">
    <source>
        <dbReference type="HAMAP-Rule" id="MF_00167"/>
    </source>
</evidence>
<evidence type="ECO:0000256" key="2">
    <source>
        <dbReference type="SAM" id="MobiDB-lite"/>
    </source>
</evidence>
<keyword id="KW-0010">Activator</keyword>
<keyword id="KW-0963">Cytoplasm</keyword>
<keyword id="KW-0678">Repressor</keyword>
<keyword id="KW-0694">RNA-binding</keyword>
<keyword id="KW-0810">Translation regulation</keyword>
<comment type="function">
    <text evidence="1">A key translational regulator that binds mRNA to regulate translation initiation and/or mRNA stability. Mediates global changes in gene expression, shifting from rapid growth to stress survival by linking envelope stress, the stringent response and the catabolite repression systems. Usually binds in the 5'-UTR; binding at or near the Shine-Dalgarno sequence prevents ribosome-binding, repressing translation, binding elsewhere in the 5'-UTR can activate translation and/or stabilize the mRNA. Its function is antagonized by small RNA(s).</text>
</comment>
<comment type="subunit">
    <text evidence="1">Homodimer; the beta-strands of each monomer intercalate to form a hydrophobic core, while the alpha-helices form wings that extend away from the core.</text>
</comment>
<comment type="subcellular location">
    <subcellularLocation>
        <location evidence="1">Cytoplasm</location>
    </subcellularLocation>
</comment>
<comment type="similarity">
    <text evidence="1">Belongs to the CsrA/RsmA family.</text>
</comment>
<protein>
    <recommendedName>
        <fullName evidence="1">Translational regulator CsrA</fullName>
    </recommendedName>
    <alternativeName>
        <fullName evidence="1">Carbon storage regulator</fullName>
    </alternativeName>
</protein>
<proteinExistence type="inferred from homology"/>
<reference key="1">
    <citation type="journal article" date="2005" name="J. Bacteriol.">
        <title>Insights into genome plasticity and pathogenicity of the plant pathogenic Bacterium Xanthomonas campestris pv. vesicatoria revealed by the complete genome sequence.</title>
        <authorList>
            <person name="Thieme F."/>
            <person name="Koebnik R."/>
            <person name="Bekel T."/>
            <person name="Berger C."/>
            <person name="Boch J."/>
            <person name="Buettner D."/>
            <person name="Caldana C."/>
            <person name="Gaigalat L."/>
            <person name="Goesmann A."/>
            <person name="Kay S."/>
            <person name="Kirchner O."/>
            <person name="Lanz C."/>
            <person name="Linke B."/>
            <person name="McHardy A.C."/>
            <person name="Meyer F."/>
            <person name="Mittenhuber G."/>
            <person name="Nies D.H."/>
            <person name="Niesbach-Kloesgen U."/>
            <person name="Patschkowski T."/>
            <person name="Rueckert C."/>
            <person name="Rupp O."/>
            <person name="Schneiker S."/>
            <person name="Schuster S.C."/>
            <person name="Vorhoelter F.J."/>
            <person name="Weber E."/>
            <person name="Puehler A."/>
            <person name="Bonas U."/>
            <person name="Bartels D."/>
            <person name="Kaiser O."/>
        </authorList>
    </citation>
    <scope>NUCLEOTIDE SEQUENCE [LARGE SCALE GENOMIC DNA]</scope>
    <source>
        <strain>85-10</strain>
    </source>
</reference>
<feature type="chain" id="PRO_1000023438" description="Translational regulator CsrA">
    <location>
        <begin position="1"/>
        <end position="70"/>
    </location>
</feature>
<feature type="region of interest" description="Disordered" evidence="2">
    <location>
        <begin position="51"/>
        <end position="70"/>
    </location>
</feature>
<sequence length="70" mass="7566">MLILTRRVGETLMIGDSVTVTVLGVKGNQVRIGITAPKDVAVHREEIYQRIQRGDEPVASGAHHGDDSSN</sequence>